<proteinExistence type="evidence at protein level"/>
<gene>
    <name evidence="4" type="primary">bfd</name>
    <name type="synonym">yheA</name>
    <name type="ordered locus">b3337</name>
    <name type="ordered locus">JW3299</name>
</gene>
<reference key="1">
    <citation type="journal article" date="1989" name="J. Bacteriol.">
        <title>Cloning, sequencing, and mapping of the bacterioferritin gene (bfr) of Escherichia coli K-12.</title>
        <authorList>
            <person name="Andrews S.C."/>
            <person name="Harrison P.M."/>
            <person name="Guest J.R."/>
        </authorList>
    </citation>
    <scope>NUCLEOTIDE SEQUENCE [GENOMIC DNA]</scope>
    <source>
        <strain>K12</strain>
    </source>
</reference>
<reference key="2">
    <citation type="submission" date="1998-04" db="EMBL/GenBank/DDBJ databases">
        <authorList>
            <person name="Noorani S.M."/>
            <person name="Lindahl L."/>
            <person name="Zengel J.M."/>
        </authorList>
    </citation>
    <scope>NUCLEOTIDE SEQUENCE [GENOMIC DNA]</scope>
    <source>
        <strain>ECOR 30</strain>
    </source>
</reference>
<reference key="3">
    <citation type="journal article" date="1997" name="Science">
        <title>The complete genome sequence of Escherichia coli K-12.</title>
        <authorList>
            <person name="Blattner F.R."/>
            <person name="Plunkett G. III"/>
            <person name="Bloch C.A."/>
            <person name="Perna N.T."/>
            <person name="Burland V."/>
            <person name="Riley M."/>
            <person name="Collado-Vides J."/>
            <person name="Glasner J.D."/>
            <person name="Rode C.K."/>
            <person name="Mayhew G.F."/>
            <person name="Gregor J."/>
            <person name="Davis N.W."/>
            <person name="Kirkpatrick H.A."/>
            <person name="Goeden M.A."/>
            <person name="Rose D.J."/>
            <person name="Mau B."/>
            <person name="Shao Y."/>
        </authorList>
    </citation>
    <scope>NUCLEOTIDE SEQUENCE [LARGE SCALE GENOMIC DNA]</scope>
    <source>
        <strain>K12 / MG1655 / ATCC 47076</strain>
    </source>
</reference>
<reference key="4">
    <citation type="journal article" date="2006" name="Mol. Syst. Biol.">
        <title>Highly accurate genome sequences of Escherichia coli K-12 strains MG1655 and W3110.</title>
        <authorList>
            <person name="Hayashi K."/>
            <person name="Morooka N."/>
            <person name="Yamamoto Y."/>
            <person name="Fujita K."/>
            <person name="Isono K."/>
            <person name="Choi S."/>
            <person name="Ohtsubo E."/>
            <person name="Baba T."/>
            <person name="Wanner B.L."/>
            <person name="Mori H."/>
            <person name="Horiuchi T."/>
        </authorList>
    </citation>
    <scope>NUCLEOTIDE SEQUENCE [LARGE SCALE GENOMIC DNA]</scope>
    <source>
        <strain>K12 / W3110 / ATCC 27325 / DSM 5911</strain>
    </source>
</reference>
<reference key="5">
    <citation type="journal article" date="1996" name="Biochemistry">
        <title>A [2Fe-2S] protein encoded by an open reading frame upstream of the Escherichia coli bacterioferritin gene.</title>
        <authorList>
            <person name="Garg R.P."/>
            <person name="Vargo C.J."/>
            <person name="Cui X."/>
            <person name="Kurtz D.M. Jr."/>
        </authorList>
    </citation>
    <scope>COFACTOR</scope>
    <scope>SUBUNIT</scope>
</reference>
<reference key="6">
    <citation type="journal article" date="1996" name="Biochem. Biophys. Res. Commun.">
        <title>Spectroscopic and voltammetric characterisation of the bacterioferritin-associated ferredoxin of Escherichia coli.</title>
        <authorList>
            <person name="Quail M.A."/>
            <person name="Jordan P."/>
            <person name="Grogan J.M."/>
            <person name="Butt J.N."/>
            <person name="Lutz M."/>
            <person name="Thomson A.J."/>
            <person name="Andrews S.C."/>
            <person name="Guest J.R."/>
        </authorList>
    </citation>
    <scope>COFACTOR</scope>
    <scope>BIOPHYSICOCHEMICAL PROPERTIES</scope>
</reference>
<evidence type="ECO:0000250" key="1">
    <source>
        <dbReference type="UniProtKB" id="Q9HY80"/>
    </source>
</evidence>
<evidence type="ECO:0000269" key="2">
    <source>
    </source>
</evidence>
<evidence type="ECO:0000269" key="3">
    <source>
    </source>
</evidence>
<evidence type="ECO:0000303" key="4">
    <source>
    </source>
</evidence>
<evidence type="ECO:0000305" key="5"/>
<sequence length="64" mass="7363">MYVCLCNGISDKKIRQAVRQFSPHSFQQLKKFIPVGNQCGKCVRAAREVMEDELMQLPEFKESA</sequence>
<feature type="chain" id="PRO_0000064914" description="Bacterioferritin-associated ferredoxin">
    <location>
        <begin position="1"/>
        <end position="64"/>
    </location>
</feature>
<feature type="binding site" evidence="1">
    <location>
        <position position="4"/>
    </location>
    <ligand>
        <name>[2Fe-2S] cluster</name>
        <dbReference type="ChEBI" id="CHEBI:190135"/>
    </ligand>
</feature>
<feature type="binding site" evidence="1">
    <location>
        <position position="6"/>
    </location>
    <ligand>
        <name>[2Fe-2S] cluster</name>
        <dbReference type="ChEBI" id="CHEBI:190135"/>
    </ligand>
</feature>
<feature type="binding site" evidence="1">
    <location>
        <position position="39"/>
    </location>
    <ligand>
        <name>[2Fe-2S] cluster</name>
        <dbReference type="ChEBI" id="CHEBI:190135"/>
    </ligand>
</feature>
<feature type="binding site" evidence="1">
    <location>
        <position position="42"/>
    </location>
    <ligand>
        <name>[2Fe-2S] cluster</name>
        <dbReference type="ChEBI" id="CHEBI:190135"/>
    </ligand>
</feature>
<feature type="sequence variant" description="In strain: ECOR 30.">
    <original>I</original>
    <variation>V</variation>
    <location>
        <position position="9"/>
    </location>
</feature>
<feature type="sequence variant" description="In strain: ECOR 30.">
    <original>SPH</original>
    <variation>HPQ</variation>
    <location>
        <begin position="22"/>
        <end position="24"/>
    </location>
</feature>
<feature type="sequence variant" description="In strain: ECOR 30.">
    <original>K</original>
    <variation>R</variation>
    <location>
        <position position="30"/>
    </location>
</feature>
<feature type="sequence variant" description="In strain: ECOR 30.">
    <original>V</original>
    <variation>I</variation>
    <location>
        <position position="43"/>
    </location>
</feature>
<feature type="sequence variant" description="In strain: ECOR 30.">
    <original>E</original>
    <variation>Q</variation>
    <location>
        <position position="51"/>
    </location>
</feature>
<feature type="sequence variant" description="In strain: ECOR 30.">
    <original>L</original>
    <variation>M</variation>
    <location>
        <position position="57"/>
    </location>
</feature>
<feature type="sequence variant" description="In strain: ECOR 30.">
    <original>S</original>
    <variation>I</variation>
    <location>
        <position position="63"/>
    </location>
</feature>
<keyword id="KW-0001">2Fe-2S</keyword>
<keyword id="KW-0249">Electron transport</keyword>
<keyword id="KW-0408">Iron</keyword>
<keyword id="KW-0411">Iron-sulfur</keyword>
<keyword id="KW-0479">Metal-binding</keyword>
<keyword id="KW-1185">Reference proteome</keyword>
<keyword id="KW-0813">Transport</keyword>
<name>BFD_ECOLI</name>
<dbReference type="EMBL" id="M27176">
    <property type="protein sequence ID" value="AAC13986.1"/>
    <property type="molecule type" value="mRNA"/>
</dbReference>
<dbReference type="EMBL" id="AF058450">
    <property type="protein sequence ID" value="AAC14287.1"/>
    <property type="molecule type" value="Genomic_DNA"/>
</dbReference>
<dbReference type="EMBL" id="U18997">
    <property type="protein sequence ID" value="AAA58134.1"/>
    <property type="molecule type" value="Genomic_DNA"/>
</dbReference>
<dbReference type="EMBL" id="U00096">
    <property type="protein sequence ID" value="AAC76362.1"/>
    <property type="molecule type" value="Genomic_DNA"/>
</dbReference>
<dbReference type="EMBL" id="AP009048">
    <property type="protein sequence ID" value="BAE77954.1"/>
    <property type="molecule type" value="Genomic_DNA"/>
</dbReference>
<dbReference type="PIR" id="JV0033">
    <property type="entry name" value="QQECB7"/>
</dbReference>
<dbReference type="RefSeq" id="NP_417796.1">
    <property type="nucleotide sequence ID" value="NC_000913.3"/>
</dbReference>
<dbReference type="RefSeq" id="WP_000289085.1">
    <property type="nucleotide sequence ID" value="NZ_STEB01000038.1"/>
</dbReference>
<dbReference type="SMR" id="P0AE56"/>
<dbReference type="BioGRID" id="4262467">
    <property type="interactions" value="9"/>
</dbReference>
<dbReference type="FunCoup" id="P0AE56">
    <property type="interactions" value="35"/>
</dbReference>
<dbReference type="IntAct" id="P0AE56">
    <property type="interactions" value="1"/>
</dbReference>
<dbReference type="STRING" id="511145.b3337"/>
<dbReference type="PaxDb" id="511145-b3337"/>
<dbReference type="EnsemblBacteria" id="AAC76362">
    <property type="protein sequence ID" value="AAC76362"/>
    <property type="gene ID" value="b3337"/>
</dbReference>
<dbReference type="GeneID" id="86862265"/>
<dbReference type="GeneID" id="947836"/>
<dbReference type="KEGG" id="ecj:JW3299"/>
<dbReference type="KEGG" id="eco:b3337"/>
<dbReference type="KEGG" id="ecoc:C3026_18125"/>
<dbReference type="PATRIC" id="fig|1411691.4.peg.3394"/>
<dbReference type="EchoBASE" id="EB1168"/>
<dbReference type="eggNOG" id="COG2906">
    <property type="taxonomic scope" value="Bacteria"/>
</dbReference>
<dbReference type="HOGENOM" id="CLU_159205_3_4_6"/>
<dbReference type="InParanoid" id="P0AE56"/>
<dbReference type="OMA" id="CLCTGVT"/>
<dbReference type="OrthoDB" id="9815350at2"/>
<dbReference type="PhylomeDB" id="P0AE56"/>
<dbReference type="BioCyc" id="EcoCyc:EG11181-MONOMER"/>
<dbReference type="PRO" id="PR:P0AE56"/>
<dbReference type="Proteomes" id="UP000000625">
    <property type="component" value="Chromosome"/>
</dbReference>
<dbReference type="GO" id="GO:0051537">
    <property type="term" value="F:2 iron, 2 sulfur cluster binding"/>
    <property type="evidence" value="ECO:0000314"/>
    <property type="project" value="EcoCyc"/>
</dbReference>
<dbReference type="GO" id="GO:0046872">
    <property type="term" value="F:metal ion binding"/>
    <property type="evidence" value="ECO:0007669"/>
    <property type="project" value="UniProtKB-KW"/>
</dbReference>
<dbReference type="CDD" id="cd19945">
    <property type="entry name" value="Fer2_BFD"/>
    <property type="match status" value="1"/>
</dbReference>
<dbReference type="FunFam" id="1.10.10.1100:FF:000001">
    <property type="entry name" value="Bacterioferritin-associated ferredoxin"/>
    <property type="match status" value="1"/>
</dbReference>
<dbReference type="Gene3D" id="1.10.10.1100">
    <property type="entry name" value="BFD-like [2Fe-2S]-binding domain"/>
    <property type="match status" value="1"/>
</dbReference>
<dbReference type="InterPro" id="IPR052371">
    <property type="entry name" value="BFD-associated_ferredoxin"/>
</dbReference>
<dbReference type="InterPro" id="IPR007419">
    <property type="entry name" value="BFD-like_2Fe2S-bd_dom"/>
</dbReference>
<dbReference type="InterPro" id="IPR041854">
    <property type="entry name" value="BFD-like_2Fe2S-bd_dom_sf"/>
</dbReference>
<dbReference type="NCBIfam" id="NF007803">
    <property type="entry name" value="PRK10509.1"/>
    <property type="match status" value="1"/>
</dbReference>
<dbReference type="PANTHER" id="PTHR37424">
    <property type="entry name" value="BACTERIOFERRITIN-ASSOCIATED FERREDOXIN"/>
    <property type="match status" value="1"/>
</dbReference>
<dbReference type="PANTHER" id="PTHR37424:SF1">
    <property type="entry name" value="BACTERIOFERRITIN-ASSOCIATED FERREDOXIN"/>
    <property type="match status" value="1"/>
</dbReference>
<dbReference type="Pfam" id="PF04324">
    <property type="entry name" value="Fer2_BFD"/>
    <property type="match status" value="1"/>
</dbReference>
<comment type="function">
    <text evidence="1">Required for mobilization of iron from the bacterioferritin (BFR) complex (By similarity).</text>
</comment>
<comment type="cofactor">
    <cofactor evidence="2 3">
        <name>[2Fe-2S] cluster</name>
        <dbReference type="ChEBI" id="CHEBI:190135"/>
    </cofactor>
    <text evidence="2 3">Binds 1 [2Fe-2S] cluster.</text>
</comment>
<comment type="biophysicochemical properties">
    <redoxPotential>
        <text evidence="3">E(0) is +255 +/-5 mV.</text>
    </redoxPotential>
</comment>
<comment type="subunit">
    <text evidence="1 2">Monomer (PubMed:8639572). Interacts with bacterioferritin (BFR) (PubMed:8639572). Up to 12 Bfd proteins can bind to the BFR (By similarity).</text>
</comment>
<comment type="similarity">
    <text evidence="5">Belongs to the Bfd family.</text>
</comment>
<accession>P0AE56</accession>
<accession>O68930</accession>
<accession>P13655</accession>
<accession>Q2M702</accession>
<organism>
    <name type="scientific">Escherichia coli (strain K12)</name>
    <dbReference type="NCBI Taxonomy" id="83333"/>
    <lineage>
        <taxon>Bacteria</taxon>
        <taxon>Pseudomonadati</taxon>
        <taxon>Pseudomonadota</taxon>
        <taxon>Gammaproteobacteria</taxon>
        <taxon>Enterobacterales</taxon>
        <taxon>Enterobacteriaceae</taxon>
        <taxon>Escherichia</taxon>
    </lineage>
</organism>
<protein>
    <recommendedName>
        <fullName>Bacterioferritin-associated ferredoxin</fullName>
        <shortName evidence="4">Bfd</shortName>
    </recommendedName>
</protein>